<proteinExistence type="evidence at protein level"/>
<name>ZN592_MOUSE</name>
<evidence type="ECO:0000250" key="1">
    <source>
        <dbReference type="UniProtKB" id="Q92610"/>
    </source>
</evidence>
<evidence type="ECO:0000255" key="2">
    <source>
        <dbReference type="PROSITE-ProRule" id="PRU00042"/>
    </source>
</evidence>
<evidence type="ECO:0000256" key="3">
    <source>
        <dbReference type="SAM" id="MobiDB-lite"/>
    </source>
</evidence>
<evidence type="ECO:0000269" key="4">
    <source>
    </source>
</evidence>
<evidence type="ECO:0000305" key="5"/>
<evidence type="ECO:0007744" key="6">
    <source>
    </source>
</evidence>
<feature type="chain" id="PRO_0000047683" description="Zinc finger protein 592">
    <location>
        <begin position="1"/>
        <end position="1262"/>
    </location>
</feature>
<feature type="zinc finger region" description="C2H2-type 1; atypical" evidence="2">
    <location>
        <begin position="587"/>
        <end position="612"/>
    </location>
</feature>
<feature type="zinc finger region" description="C2H2-type 2; atypical" evidence="2">
    <location>
        <begin position="615"/>
        <end position="639"/>
    </location>
</feature>
<feature type="zinc finger region" description="C2H2-type 3; degenerate" evidence="2">
    <location>
        <begin position="711"/>
        <end position="731"/>
    </location>
</feature>
<feature type="zinc finger region" description="C2H2-type 4" evidence="2">
    <location>
        <begin position="740"/>
        <end position="764"/>
    </location>
</feature>
<feature type="zinc finger region" description="C2H2-type 5; atypical" evidence="2">
    <location>
        <begin position="768"/>
        <end position="790"/>
    </location>
</feature>
<feature type="zinc finger region" description="C2H2-type 6" evidence="2">
    <location>
        <begin position="799"/>
        <end position="822"/>
    </location>
</feature>
<feature type="zinc finger region" description="C2H2-type 7" evidence="2">
    <location>
        <begin position="827"/>
        <end position="850"/>
    </location>
</feature>
<feature type="zinc finger region" description="C2H2-type 8" evidence="2">
    <location>
        <begin position="892"/>
        <end position="915"/>
    </location>
</feature>
<feature type="zinc finger region" description="C2H2-type 9" evidence="2">
    <location>
        <begin position="983"/>
        <end position="1006"/>
    </location>
</feature>
<feature type="zinc finger region" description="C2H2-type 10" evidence="2">
    <location>
        <begin position="1013"/>
        <end position="1036"/>
    </location>
</feature>
<feature type="zinc finger region" description="C2H2-type 11; atypical" evidence="2">
    <location>
        <begin position="1043"/>
        <end position="1069"/>
    </location>
</feature>
<feature type="zinc finger region" description="C2H2-type 12; atypical" evidence="2">
    <location>
        <begin position="1124"/>
        <end position="1146"/>
    </location>
</feature>
<feature type="zinc finger region" description="C2H2-type 13" evidence="2">
    <location>
        <begin position="1153"/>
        <end position="1176"/>
    </location>
</feature>
<feature type="region of interest" description="Disordered" evidence="3">
    <location>
        <begin position="23"/>
        <end position="45"/>
    </location>
</feature>
<feature type="region of interest" description="Disordered" evidence="3">
    <location>
        <begin position="122"/>
        <end position="174"/>
    </location>
</feature>
<feature type="region of interest" description="Disordered" evidence="3">
    <location>
        <begin position="200"/>
        <end position="278"/>
    </location>
</feature>
<feature type="region of interest" description="Disordered" evidence="3">
    <location>
        <begin position="294"/>
        <end position="494"/>
    </location>
</feature>
<feature type="region of interest" description="Disordered" evidence="3">
    <location>
        <begin position="924"/>
        <end position="979"/>
    </location>
</feature>
<feature type="region of interest" description="Disordered" evidence="3">
    <location>
        <begin position="1222"/>
        <end position="1262"/>
    </location>
</feature>
<feature type="compositionally biased region" description="Basic and acidic residues" evidence="3">
    <location>
        <begin position="213"/>
        <end position="232"/>
    </location>
</feature>
<feature type="compositionally biased region" description="Basic and acidic residues" evidence="3">
    <location>
        <begin position="298"/>
        <end position="308"/>
    </location>
</feature>
<feature type="compositionally biased region" description="Low complexity" evidence="3">
    <location>
        <begin position="343"/>
        <end position="367"/>
    </location>
</feature>
<feature type="compositionally biased region" description="Polar residues" evidence="3">
    <location>
        <begin position="454"/>
        <end position="463"/>
    </location>
</feature>
<feature type="compositionally biased region" description="Low complexity" evidence="3">
    <location>
        <begin position="484"/>
        <end position="494"/>
    </location>
</feature>
<feature type="compositionally biased region" description="Low complexity" evidence="3">
    <location>
        <begin position="924"/>
        <end position="935"/>
    </location>
</feature>
<feature type="compositionally biased region" description="Basic and acidic residues" evidence="3">
    <location>
        <begin position="964"/>
        <end position="976"/>
    </location>
</feature>
<feature type="compositionally biased region" description="Polar residues" evidence="3">
    <location>
        <begin position="1241"/>
        <end position="1262"/>
    </location>
</feature>
<feature type="modified residue" description="Phosphoserine" evidence="1">
    <location>
        <position position="78"/>
    </location>
</feature>
<feature type="modified residue" description="Phosphoserine" evidence="6">
    <location>
        <position position="142"/>
    </location>
</feature>
<feature type="modified residue" description="Phosphoserine" evidence="6">
    <location>
        <position position="145"/>
    </location>
</feature>
<feature type="modified residue" description="Phosphoserine" evidence="6">
    <location>
        <position position="146"/>
    </location>
</feature>
<feature type="modified residue" description="Phosphoserine" evidence="1">
    <location>
        <position position="529"/>
    </location>
</feature>
<feature type="modified residue" description="Phosphoserine" evidence="6">
    <location>
        <position position="573"/>
    </location>
</feature>
<feature type="modified residue" description="Phosphoserine" evidence="1">
    <location>
        <position position="691"/>
    </location>
</feature>
<feature type="modified residue" description="Phosphoserine" evidence="1">
    <location>
        <position position="1089"/>
    </location>
</feature>
<feature type="modified residue" description="Phosphoserine" evidence="6">
    <location>
        <position position="1198"/>
    </location>
</feature>
<feature type="modified residue" description="Phosphoserine" evidence="6">
    <location>
        <position position="1202"/>
    </location>
</feature>
<feature type="cross-link" description="Glycyl lysine isopeptide (Lys-Gly) (interchain with G-Cter in SUMO2)" evidence="1">
    <location>
        <position position="200"/>
    </location>
</feature>
<feature type="cross-link" description="Glycyl lysine isopeptide (Lys-Gly) (interchain with G-Cter in SUMO2)" evidence="1">
    <location>
        <position position="204"/>
    </location>
</feature>
<feature type="cross-link" description="Glycyl lysine isopeptide (Lys-Gly) (interchain with G-Cter in SUMO2)" evidence="1">
    <location>
        <position position="546"/>
    </location>
</feature>
<feature type="sequence conflict" description="In Ref. 3; AAH44728." evidence="5" ref="3">
    <original>LVPHSVAASVTA</original>
    <variation>PRVRPRVRPRVR</variation>
    <location>
        <begin position="510"/>
        <end position="521"/>
    </location>
</feature>
<feature type="sequence conflict" description="In Ref. 1; BAC97899." evidence="5" ref="1">
    <original>L</original>
    <variation>F</variation>
    <location>
        <position position="625"/>
    </location>
</feature>
<feature type="sequence conflict" description="In Ref. 1; BAC97899 and 3; AAH44728." evidence="5" ref="1 3">
    <original>I</original>
    <variation>V</variation>
    <location>
        <position position="761"/>
    </location>
</feature>
<keyword id="KW-0238">DNA-binding</keyword>
<keyword id="KW-1017">Isopeptide bond</keyword>
<keyword id="KW-0479">Metal-binding</keyword>
<keyword id="KW-0539">Nucleus</keyword>
<keyword id="KW-0597">Phosphoprotein</keyword>
<keyword id="KW-1185">Reference proteome</keyword>
<keyword id="KW-0677">Repeat</keyword>
<keyword id="KW-0804">Transcription</keyword>
<keyword id="KW-0805">Transcription regulation</keyword>
<keyword id="KW-0832">Ubl conjugation</keyword>
<keyword id="KW-0862">Zinc</keyword>
<keyword id="KW-0863">Zinc-finger</keyword>
<reference key="1">
    <citation type="journal article" date="2003" name="DNA Res.">
        <title>Prediction of the coding sequences of mouse homologues of KIAA gene: III. The complete nucleotide sequences of 500 mouse KIAA-homologous cDNAs identified by screening of terminal sequences of cDNA clones randomly sampled from size-fractionated libraries.</title>
        <authorList>
            <person name="Okazaki N."/>
            <person name="Kikuno R."/>
            <person name="Ohara R."/>
            <person name="Inamoto S."/>
            <person name="Koseki H."/>
            <person name="Hiraoka S."/>
            <person name="Saga Y."/>
            <person name="Nagase T."/>
            <person name="Ohara O."/>
            <person name="Koga H."/>
        </authorList>
    </citation>
    <scope>NUCLEOTIDE SEQUENCE [LARGE SCALE MRNA]</scope>
    <source>
        <tissue>Embryonic tail</tissue>
    </source>
</reference>
<reference key="2">
    <citation type="journal article" date="2005" name="Science">
        <title>The transcriptional landscape of the mammalian genome.</title>
        <authorList>
            <person name="Carninci P."/>
            <person name="Kasukawa T."/>
            <person name="Katayama S."/>
            <person name="Gough J."/>
            <person name="Frith M.C."/>
            <person name="Maeda N."/>
            <person name="Oyama R."/>
            <person name="Ravasi T."/>
            <person name="Lenhard B."/>
            <person name="Wells C."/>
            <person name="Kodzius R."/>
            <person name="Shimokawa K."/>
            <person name="Bajic V.B."/>
            <person name="Brenner S.E."/>
            <person name="Batalov S."/>
            <person name="Forrest A.R."/>
            <person name="Zavolan M."/>
            <person name="Davis M.J."/>
            <person name="Wilming L.G."/>
            <person name="Aidinis V."/>
            <person name="Allen J.E."/>
            <person name="Ambesi-Impiombato A."/>
            <person name="Apweiler R."/>
            <person name="Aturaliya R.N."/>
            <person name="Bailey T.L."/>
            <person name="Bansal M."/>
            <person name="Baxter L."/>
            <person name="Beisel K.W."/>
            <person name="Bersano T."/>
            <person name="Bono H."/>
            <person name="Chalk A.M."/>
            <person name="Chiu K.P."/>
            <person name="Choudhary V."/>
            <person name="Christoffels A."/>
            <person name="Clutterbuck D.R."/>
            <person name="Crowe M.L."/>
            <person name="Dalla E."/>
            <person name="Dalrymple B.P."/>
            <person name="de Bono B."/>
            <person name="Della Gatta G."/>
            <person name="di Bernardo D."/>
            <person name="Down T."/>
            <person name="Engstrom P."/>
            <person name="Fagiolini M."/>
            <person name="Faulkner G."/>
            <person name="Fletcher C.F."/>
            <person name="Fukushima T."/>
            <person name="Furuno M."/>
            <person name="Futaki S."/>
            <person name="Gariboldi M."/>
            <person name="Georgii-Hemming P."/>
            <person name="Gingeras T.R."/>
            <person name="Gojobori T."/>
            <person name="Green R.E."/>
            <person name="Gustincich S."/>
            <person name="Harbers M."/>
            <person name="Hayashi Y."/>
            <person name="Hensch T.K."/>
            <person name="Hirokawa N."/>
            <person name="Hill D."/>
            <person name="Huminiecki L."/>
            <person name="Iacono M."/>
            <person name="Ikeo K."/>
            <person name="Iwama A."/>
            <person name="Ishikawa T."/>
            <person name="Jakt M."/>
            <person name="Kanapin A."/>
            <person name="Katoh M."/>
            <person name="Kawasawa Y."/>
            <person name="Kelso J."/>
            <person name="Kitamura H."/>
            <person name="Kitano H."/>
            <person name="Kollias G."/>
            <person name="Krishnan S.P."/>
            <person name="Kruger A."/>
            <person name="Kummerfeld S.K."/>
            <person name="Kurochkin I.V."/>
            <person name="Lareau L.F."/>
            <person name="Lazarevic D."/>
            <person name="Lipovich L."/>
            <person name="Liu J."/>
            <person name="Liuni S."/>
            <person name="McWilliam S."/>
            <person name="Madan Babu M."/>
            <person name="Madera M."/>
            <person name="Marchionni L."/>
            <person name="Matsuda H."/>
            <person name="Matsuzawa S."/>
            <person name="Miki H."/>
            <person name="Mignone F."/>
            <person name="Miyake S."/>
            <person name="Morris K."/>
            <person name="Mottagui-Tabar S."/>
            <person name="Mulder N."/>
            <person name="Nakano N."/>
            <person name="Nakauchi H."/>
            <person name="Ng P."/>
            <person name="Nilsson R."/>
            <person name="Nishiguchi S."/>
            <person name="Nishikawa S."/>
            <person name="Nori F."/>
            <person name="Ohara O."/>
            <person name="Okazaki Y."/>
            <person name="Orlando V."/>
            <person name="Pang K.C."/>
            <person name="Pavan W.J."/>
            <person name="Pavesi G."/>
            <person name="Pesole G."/>
            <person name="Petrovsky N."/>
            <person name="Piazza S."/>
            <person name="Reed J."/>
            <person name="Reid J.F."/>
            <person name="Ring B.Z."/>
            <person name="Ringwald M."/>
            <person name="Rost B."/>
            <person name="Ruan Y."/>
            <person name="Salzberg S.L."/>
            <person name="Sandelin A."/>
            <person name="Schneider C."/>
            <person name="Schoenbach C."/>
            <person name="Sekiguchi K."/>
            <person name="Semple C.A."/>
            <person name="Seno S."/>
            <person name="Sessa L."/>
            <person name="Sheng Y."/>
            <person name="Shibata Y."/>
            <person name="Shimada H."/>
            <person name="Shimada K."/>
            <person name="Silva D."/>
            <person name="Sinclair B."/>
            <person name="Sperling S."/>
            <person name="Stupka E."/>
            <person name="Sugiura K."/>
            <person name="Sultana R."/>
            <person name="Takenaka Y."/>
            <person name="Taki K."/>
            <person name="Tammoja K."/>
            <person name="Tan S.L."/>
            <person name="Tang S."/>
            <person name="Taylor M.S."/>
            <person name="Tegner J."/>
            <person name="Teichmann S.A."/>
            <person name="Ueda H.R."/>
            <person name="van Nimwegen E."/>
            <person name="Verardo R."/>
            <person name="Wei C.L."/>
            <person name="Yagi K."/>
            <person name="Yamanishi H."/>
            <person name="Zabarovsky E."/>
            <person name="Zhu S."/>
            <person name="Zimmer A."/>
            <person name="Hide W."/>
            <person name="Bult C."/>
            <person name="Grimmond S.M."/>
            <person name="Teasdale R.D."/>
            <person name="Liu E.T."/>
            <person name="Brusic V."/>
            <person name="Quackenbush J."/>
            <person name="Wahlestedt C."/>
            <person name="Mattick J.S."/>
            <person name="Hume D.A."/>
            <person name="Kai C."/>
            <person name="Sasaki D."/>
            <person name="Tomaru Y."/>
            <person name="Fukuda S."/>
            <person name="Kanamori-Katayama M."/>
            <person name="Suzuki M."/>
            <person name="Aoki J."/>
            <person name="Arakawa T."/>
            <person name="Iida J."/>
            <person name="Imamura K."/>
            <person name="Itoh M."/>
            <person name="Kato T."/>
            <person name="Kawaji H."/>
            <person name="Kawagashira N."/>
            <person name="Kawashima T."/>
            <person name="Kojima M."/>
            <person name="Kondo S."/>
            <person name="Konno H."/>
            <person name="Nakano K."/>
            <person name="Ninomiya N."/>
            <person name="Nishio T."/>
            <person name="Okada M."/>
            <person name="Plessy C."/>
            <person name="Shibata K."/>
            <person name="Shiraki T."/>
            <person name="Suzuki S."/>
            <person name="Tagami M."/>
            <person name="Waki K."/>
            <person name="Watahiki A."/>
            <person name="Okamura-Oho Y."/>
            <person name="Suzuki H."/>
            <person name="Kawai J."/>
            <person name="Hayashizaki Y."/>
        </authorList>
    </citation>
    <scope>NUCLEOTIDE SEQUENCE [LARGE SCALE MRNA]</scope>
    <source>
        <strain>C57BL/6J</strain>
        <tissue>Cerebellum</tissue>
    </source>
</reference>
<reference key="3">
    <citation type="journal article" date="2004" name="Genome Res.">
        <title>The status, quality, and expansion of the NIH full-length cDNA project: the Mammalian Gene Collection (MGC).</title>
        <authorList>
            <consortium name="The MGC Project Team"/>
        </authorList>
    </citation>
    <scope>NUCLEOTIDE SEQUENCE [LARGE SCALE MRNA] OF 162-1217</scope>
    <source>
        <strain>C57BL/6J</strain>
        <strain>FVB/N</strain>
        <tissue>Brain</tissue>
        <tissue>Liver</tissue>
    </source>
</reference>
<reference key="4">
    <citation type="journal article" date="2010" name="Cell">
        <title>A tissue-specific atlas of mouse protein phosphorylation and expression.</title>
        <authorList>
            <person name="Huttlin E.L."/>
            <person name="Jedrychowski M.P."/>
            <person name="Elias J.E."/>
            <person name="Goswami T."/>
            <person name="Rad R."/>
            <person name="Beausoleil S.A."/>
            <person name="Villen J."/>
            <person name="Haas W."/>
            <person name="Sowa M.E."/>
            <person name="Gygi S.P."/>
        </authorList>
    </citation>
    <scope>PHOSPHORYLATION [LARGE SCALE ANALYSIS] AT SER-142; SER-145; SER-146; SER-573; SER-1198 AND SER-1202</scope>
    <scope>IDENTIFICATION BY MASS SPECTROMETRY [LARGE SCALE ANALYSIS]</scope>
    <source>
        <tissue>Brain</tissue>
        <tissue>Kidney</tissue>
        <tissue>Liver</tissue>
        <tissue>Lung</tissue>
        <tissue>Pancreas</tissue>
        <tissue>Spleen</tissue>
        <tissue>Testis</tissue>
    </source>
</reference>
<reference key="5">
    <citation type="journal article" date="2010" name="Eur. J. Hum. Genet.">
        <title>CAMOS, a nonprogressive, autosomal recessive, congenital cerebellar ataxia, is caused by a mutant zinc-finger protein, ZNF592.</title>
        <authorList>
            <person name="Nicolas E."/>
            <person name="Poitelon Y."/>
            <person name="Chouery E."/>
            <person name="Salem N."/>
            <person name="Levy N."/>
            <person name="Megarbane A."/>
            <person name="Delague V."/>
        </authorList>
    </citation>
    <scope>TISSUE SPECIFICITY</scope>
    <scope>DEVELOPMENTAL STAGE</scope>
</reference>
<organism>
    <name type="scientific">Mus musculus</name>
    <name type="common">Mouse</name>
    <dbReference type="NCBI Taxonomy" id="10090"/>
    <lineage>
        <taxon>Eukaryota</taxon>
        <taxon>Metazoa</taxon>
        <taxon>Chordata</taxon>
        <taxon>Craniata</taxon>
        <taxon>Vertebrata</taxon>
        <taxon>Euteleostomi</taxon>
        <taxon>Mammalia</taxon>
        <taxon>Eutheria</taxon>
        <taxon>Euarchontoglires</taxon>
        <taxon>Glires</taxon>
        <taxon>Rodentia</taxon>
        <taxon>Myomorpha</taxon>
        <taxon>Muroidea</taxon>
        <taxon>Muridae</taxon>
        <taxon>Murinae</taxon>
        <taxon>Mus</taxon>
        <taxon>Mus</taxon>
    </lineage>
</organism>
<sequence length="1262" mass="137514">MGDMKTPDFDDLLAAFDIPDPTSLDAKEAIQAPSEENESPLKSSGMCIDENVSLSHSGSAPDVPAVSVIVKNTSRQESFEAEKDHIAPSLLHNGFRGSDLPPDSHHCGKFDSTFINGDSARSFTSKLEPSKSEPLPTFNQFSPISSPEPEDPVKDNGFGIKSKHSDSYFPPPPGTVGGPVLEALSKFPVPELHMFDHFCKKEPKPEPLPLESQQEHEQGGQKVVEPHKDLDSSRFFGEALEFNSHPSNSIGEPKKLAPELSACSSVPPRQRLKPAHSKLSSCVAALVALQAKRVANVTKEDQPGHTKDSSGPTKEGSKGSPKMPKSPKSPRSPLEATRKSIKPSDSPRSICSDSSSKGSPSVAASSPPAIPKVRIKTIKTSSGEIKRTVTRILPDPDDPSKSPAESPAGSTITEAPSEAPGDEGTAMPVEEHFSEAGIHSGSPQGDRKGDENMIKTSDSSSPCRISGSRVPKGSALNSQASKKQQSTAPQASTPAASLLPKAVHLANLNLVPHSVAASVTAKSSAQRRSQPQVTQMTVPLVHQVKKAAPLIVEVFNKVLHSSNPVPLYAPNLSPPADSRIHVPASGYCCLECGDAFALEKSLSQHYSRRSVHIEVLCTLCSKTLLFFNKCSLLRHARDHKSKGLVMQCSQLLVKPISADQMFVAAPVNSTAPATPAASSSPKPSPTLDNASSVIPALPLYPDPVRLIRYGTKCPECHKQMRDYMVLATHFQRTTEETEGLTCQVCQMLLPNQCSFCAHQRIHAHKSPYCCPECGVLCRSAYFQTHVKENCLHYARKVGYRCIHCGVIHLTLALLKSHIQERHCQVFHKCAFCPMAFKTASSTMDHSTTQHPTQPHKPSQLIYKCSCEMVFNKKRHIQQHFYQNVSKTQAGVFKCPECPLLFLQKPELMQHVKNTHGVPRNVEELSSLQSSTDTSSNRPGSRAPAEPPATNVAARGSSLTAGRWGRPEAHRRAEARPRMRSTGWTCQECQEWVPDRESYVSHMKKSHGRTLKRYPCRQCEQSFHNPSSLRKHIRNNHDTVKKVYTCGYCTEDSPSFPRPSLLESHISLMHGIRNPDLSQTSKVRHPGGPSPQVNHLKRPVSRMADAPGTSNGATVSSTKRHKSLFQCAKCTFATDSELEFQSHIPQHQVDSSTAQCLLCGLCYTSTSSLNRHLFIVHKVRDQEEGGEDIVEVKVEAPDSEACSGEEVAMETKENGLEECASEPLVTDLGGQQGLALDEDSAQDPQNQPQASQDQNSHALSPQV</sequence>
<comment type="function">
    <text evidence="1">May be involved in transcriptional regulation.</text>
</comment>
<comment type="subunit">
    <text evidence="1">Interacts with ZMYND8.</text>
</comment>
<comment type="subcellular location">
    <subcellularLocation>
        <location evidence="5">Nucleus</location>
    </subcellularLocation>
</comment>
<comment type="tissue specificity">
    <text evidence="4">Expressed in the brain.</text>
</comment>
<comment type="developmental stage">
    <text evidence="4">Expressed in the embryo at least from 10 dpc until birth.</text>
</comment>
<comment type="similarity">
    <text evidence="5">Belongs to the krueppel C2H2-type zinc-finger protein family.</text>
</comment>
<comment type="sequence caution" evidence="5">
    <conflict type="frameshift">
        <sequence resource="EMBL-CDS" id="BAC31327"/>
    </conflict>
</comment>
<comment type="sequence caution" evidence="5">
    <conflict type="erroneous initiation">
        <sequence resource="EMBL-CDS" id="BAC97899"/>
    </conflict>
</comment>
<protein>
    <recommendedName>
        <fullName>Zinc finger protein 592</fullName>
        <shortName>Zfp-592</shortName>
    </recommendedName>
</protein>
<dbReference type="EMBL" id="AK129089">
    <property type="protein sequence ID" value="BAC97899.1"/>
    <property type="status" value="ALT_INIT"/>
    <property type="molecule type" value="mRNA"/>
</dbReference>
<dbReference type="EMBL" id="AK042675">
    <property type="protein sequence ID" value="BAC31327.1"/>
    <property type="status" value="ALT_FRAME"/>
    <property type="molecule type" value="mRNA"/>
</dbReference>
<dbReference type="EMBL" id="BC044728">
    <property type="protein sequence ID" value="AAH44728.1"/>
    <property type="molecule type" value="mRNA"/>
</dbReference>
<dbReference type="EMBL" id="BC059073">
    <property type="protein sequence ID" value="AAH59073.1"/>
    <property type="molecule type" value="mRNA"/>
</dbReference>
<dbReference type="CCDS" id="CCDS40003.2"/>
<dbReference type="RefSeq" id="NP_848822.2">
    <property type="nucleotide sequence ID" value="NM_178707.4"/>
</dbReference>
<dbReference type="BioGRID" id="231411">
    <property type="interactions" value="7"/>
</dbReference>
<dbReference type="FunCoup" id="Q8BHZ4">
    <property type="interactions" value="3162"/>
</dbReference>
<dbReference type="IntAct" id="Q8BHZ4">
    <property type="interactions" value="4"/>
</dbReference>
<dbReference type="MINT" id="Q8BHZ4"/>
<dbReference type="STRING" id="10090.ENSMUSP00000102976"/>
<dbReference type="GlyGen" id="Q8BHZ4">
    <property type="glycosylation" value="2 sites"/>
</dbReference>
<dbReference type="iPTMnet" id="Q8BHZ4"/>
<dbReference type="PhosphoSitePlus" id="Q8BHZ4"/>
<dbReference type="jPOST" id="Q8BHZ4"/>
<dbReference type="PaxDb" id="10090-ENSMUSP00000102976"/>
<dbReference type="ProteomicsDB" id="275016"/>
<dbReference type="Pumba" id="Q8BHZ4"/>
<dbReference type="Antibodypedia" id="15495">
    <property type="antibodies" value="118 antibodies from 19 providers"/>
</dbReference>
<dbReference type="DNASU" id="233410"/>
<dbReference type="Ensembl" id="ENSMUST00000107353.3">
    <property type="protein sequence ID" value="ENSMUSP00000102976.3"/>
    <property type="gene ID" value="ENSMUSG00000005621.12"/>
</dbReference>
<dbReference type="GeneID" id="233410"/>
<dbReference type="KEGG" id="mmu:233410"/>
<dbReference type="UCSC" id="uc009ibp.2">
    <property type="organism name" value="mouse"/>
</dbReference>
<dbReference type="AGR" id="MGI:2443541"/>
<dbReference type="CTD" id="233410"/>
<dbReference type="MGI" id="MGI:2443541">
    <property type="gene designation" value="Zfp592"/>
</dbReference>
<dbReference type="VEuPathDB" id="HostDB:ENSMUSG00000005621"/>
<dbReference type="eggNOG" id="KOG1721">
    <property type="taxonomic scope" value="Eukaryota"/>
</dbReference>
<dbReference type="GeneTree" id="ENSGT00940000158357"/>
<dbReference type="HOGENOM" id="CLU_006283_0_0_1"/>
<dbReference type="InParanoid" id="Q8BHZ4"/>
<dbReference type="OMA" id="SVKKYPC"/>
<dbReference type="OrthoDB" id="8856548at2759"/>
<dbReference type="PhylomeDB" id="Q8BHZ4"/>
<dbReference type="TreeFam" id="TF329009"/>
<dbReference type="BioGRID-ORCS" id="233410">
    <property type="hits" value="7 hits in 79 CRISPR screens"/>
</dbReference>
<dbReference type="ChiTaRS" id="Zfp592">
    <property type="organism name" value="mouse"/>
</dbReference>
<dbReference type="PRO" id="PR:Q8BHZ4"/>
<dbReference type="Proteomes" id="UP000000589">
    <property type="component" value="Chromosome 7"/>
</dbReference>
<dbReference type="RNAct" id="Q8BHZ4">
    <property type="molecule type" value="protein"/>
</dbReference>
<dbReference type="Bgee" id="ENSMUSG00000005621">
    <property type="expression patterns" value="Expressed in animal zygote and 237 other cell types or tissues"/>
</dbReference>
<dbReference type="GO" id="GO:0005634">
    <property type="term" value="C:nucleus"/>
    <property type="evidence" value="ECO:0007669"/>
    <property type="project" value="UniProtKB-SubCell"/>
</dbReference>
<dbReference type="GO" id="GO:0003677">
    <property type="term" value="F:DNA binding"/>
    <property type="evidence" value="ECO:0007669"/>
    <property type="project" value="UniProtKB-KW"/>
</dbReference>
<dbReference type="GO" id="GO:0043560">
    <property type="term" value="F:insulin receptor substrate binding"/>
    <property type="evidence" value="ECO:0000353"/>
    <property type="project" value="MGI"/>
</dbReference>
<dbReference type="GO" id="GO:0042731">
    <property type="term" value="F:PH domain binding"/>
    <property type="evidence" value="ECO:0000353"/>
    <property type="project" value="MGI"/>
</dbReference>
<dbReference type="GO" id="GO:0008270">
    <property type="term" value="F:zinc ion binding"/>
    <property type="evidence" value="ECO:0007669"/>
    <property type="project" value="UniProtKB-KW"/>
</dbReference>
<dbReference type="GO" id="GO:0046627">
    <property type="term" value="P:negative regulation of insulin receptor signaling pathway"/>
    <property type="evidence" value="ECO:0000314"/>
    <property type="project" value="MGI"/>
</dbReference>
<dbReference type="FunFam" id="3.30.160.60:FF:000797">
    <property type="entry name" value="zinc finger protein 592 isoform X1"/>
    <property type="match status" value="1"/>
</dbReference>
<dbReference type="Gene3D" id="3.30.160.60">
    <property type="entry name" value="Classic Zinc Finger"/>
    <property type="match status" value="4"/>
</dbReference>
<dbReference type="InterPro" id="IPR045914">
    <property type="entry name" value="Zn532-like"/>
</dbReference>
<dbReference type="InterPro" id="IPR041697">
    <property type="entry name" value="Znf-C2H2_11"/>
</dbReference>
<dbReference type="InterPro" id="IPR036236">
    <property type="entry name" value="Znf_C2H2_sf"/>
</dbReference>
<dbReference type="InterPro" id="IPR013087">
    <property type="entry name" value="Znf_C2H2_type"/>
</dbReference>
<dbReference type="PANTHER" id="PTHR47222">
    <property type="entry name" value="ZINC FINGER PROTEIN 532-RELATED"/>
    <property type="match status" value="1"/>
</dbReference>
<dbReference type="PANTHER" id="PTHR47222:SF1">
    <property type="entry name" value="ZINC FINGER PROTEIN 592"/>
    <property type="match status" value="1"/>
</dbReference>
<dbReference type="Pfam" id="PF16622">
    <property type="entry name" value="zf-C2H2_11"/>
    <property type="match status" value="1"/>
</dbReference>
<dbReference type="Pfam" id="PF25412">
    <property type="entry name" value="zf-C2H2_ZNF592"/>
    <property type="match status" value="1"/>
</dbReference>
<dbReference type="SMART" id="SM00355">
    <property type="entry name" value="ZnF_C2H2"/>
    <property type="match status" value="13"/>
</dbReference>
<dbReference type="SUPFAM" id="SSF57667">
    <property type="entry name" value="beta-beta-alpha zinc fingers"/>
    <property type="match status" value="1"/>
</dbReference>
<dbReference type="PROSITE" id="PS00028">
    <property type="entry name" value="ZINC_FINGER_C2H2_1"/>
    <property type="match status" value="6"/>
</dbReference>
<dbReference type="PROSITE" id="PS50157">
    <property type="entry name" value="ZINC_FINGER_C2H2_2"/>
    <property type="match status" value="4"/>
</dbReference>
<gene>
    <name type="primary">Znf592</name>
    <name type="synonym">Kiaa0211</name>
    <name type="synonym">Zfp592</name>
</gene>
<accession>Q8BHZ4</accession>
<accession>Q80XM1</accession>